<protein>
    <recommendedName>
        <fullName evidence="1">Pyridoxine 5'-phosphate synthase</fullName>
        <shortName evidence="1">PNP synthase</shortName>
        <ecNumber evidence="1">2.6.99.2</ecNumber>
    </recommendedName>
</protein>
<sequence length="264" mass="28445">MTATAQILPNTLEQNSDNISKKPLLGVNVDHVATLRQARGVSYPSPLAAALLCEKAGADGITIHLREDRRHIQDADVYEMAGQLTTRMNLEMAATTEMLEIACRVKPYWVCLVPEKRAELTTEGGLDVAGQLDLLKDYVAKLQAAGIKVSLFIDPEDKQINAAVTCGADAIELHTGSYAEAGLAGDIEKGSVELERIKTAVITAKRIDSKLLVNAGHGLTHDNVNAIAQIDGIYELNIGHALIADALFVGIEQAVIMMKIAMHR</sequence>
<reference key="1">
    <citation type="journal article" date="2010" name="Appl. Environ. Microbiol.">
        <title>The genome sequence of Psychrobacter arcticus 273-4, a psychroactive Siberian permafrost bacterium, reveals mechanisms for adaptation to low-temperature growth.</title>
        <authorList>
            <person name="Ayala-del-Rio H.L."/>
            <person name="Chain P.S."/>
            <person name="Grzymski J.J."/>
            <person name="Ponder M.A."/>
            <person name="Ivanova N."/>
            <person name="Bergholz P.W."/>
            <person name="Di Bartolo G."/>
            <person name="Hauser L."/>
            <person name="Land M."/>
            <person name="Bakermans C."/>
            <person name="Rodrigues D."/>
            <person name="Klappenbach J."/>
            <person name="Zarka D."/>
            <person name="Larimer F."/>
            <person name="Richardson P."/>
            <person name="Murray A."/>
            <person name="Thomashow M."/>
            <person name="Tiedje J.M."/>
        </authorList>
    </citation>
    <scope>NUCLEOTIDE SEQUENCE [LARGE SCALE GENOMIC DNA]</scope>
    <source>
        <strain>DSM 17307 / VKM B-2377 / 273-4</strain>
    </source>
</reference>
<gene>
    <name evidence="1" type="primary">pdxJ</name>
    <name type="ordered locus">Psyc_0336</name>
</gene>
<organism>
    <name type="scientific">Psychrobacter arcticus (strain DSM 17307 / VKM B-2377 / 273-4)</name>
    <dbReference type="NCBI Taxonomy" id="259536"/>
    <lineage>
        <taxon>Bacteria</taxon>
        <taxon>Pseudomonadati</taxon>
        <taxon>Pseudomonadota</taxon>
        <taxon>Gammaproteobacteria</taxon>
        <taxon>Moraxellales</taxon>
        <taxon>Moraxellaceae</taxon>
        <taxon>Psychrobacter</taxon>
    </lineage>
</organism>
<proteinExistence type="inferred from homology"/>
<accession>Q4FUV3</accession>
<evidence type="ECO:0000255" key="1">
    <source>
        <dbReference type="HAMAP-Rule" id="MF_00279"/>
    </source>
</evidence>
<keyword id="KW-0963">Cytoplasm</keyword>
<keyword id="KW-0664">Pyridoxine biosynthesis</keyword>
<keyword id="KW-1185">Reference proteome</keyword>
<keyword id="KW-0808">Transferase</keyword>
<name>PDXJ_PSYA2</name>
<feature type="chain" id="PRO_0000231838" description="Pyridoxine 5'-phosphate synthase">
    <location>
        <begin position="1"/>
        <end position="264"/>
    </location>
</feature>
<feature type="active site" description="Proton acceptor" evidence="1">
    <location>
        <position position="64"/>
    </location>
</feature>
<feature type="active site" description="Proton acceptor" evidence="1">
    <location>
        <position position="91"/>
    </location>
</feature>
<feature type="active site" description="Proton donor" evidence="1">
    <location>
        <position position="217"/>
    </location>
</feature>
<feature type="binding site" evidence="1">
    <location>
        <position position="28"/>
    </location>
    <ligand>
        <name>3-amino-2-oxopropyl phosphate</name>
        <dbReference type="ChEBI" id="CHEBI:57279"/>
    </ligand>
</feature>
<feature type="binding site" evidence="1">
    <location>
        <begin position="30"/>
        <end position="31"/>
    </location>
    <ligand>
        <name>1-deoxy-D-xylulose 5-phosphate</name>
        <dbReference type="ChEBI" id="CHEBI:57792"/>
    </ligand>
</feature>
<feature type="binding site" evidence="1">
    <location>
        <position position="39"/>
    </location>
    <ligand>
        <name>3-amino-2-oxopropyl phosphate</name>
        <dbReference type="ChEBI" id="CHEBI:57279"/>
    </ligand>
</feature>
<feature type="binding site" evidence="1">
    <location>
        <position position="66"/>
    </location>
    <ligand>
        <name>1-deoxy-D-xylulose 5-phosphate</name>
        <dbReference type="ChEBI" id="CHEBI:57792"/>
    </ligand>
</feature>
<feature type="binding site" evidence="1">
    <location>
        <position position="71"/>
    </location>
    <ligand>
        <name>1-deoxy-D-xylulose 5-phosphate</name>
        <dbReference type="ChEBI" id="CHEBI:57792"/>
    </ligand>
</feature>
<feature type="binding site" evidence="1">
    <location>
        <position position="121"/>
    </location>
    <ligand>
        <name>1-deoxy-D-xylulose 5-phosphate</name>
        <dbReference type="ChEBI" id="CHEBI:57792"/>
    </ligand>
</feature>
<feature type="binding site" evidence="1">
    <location>
        <position position="218"/>
    </location>
    <ligand>
        <name>3-amino-2-oxopropyl phosphate</name>
        <dbReference type="ChEBI" id="CHEBI:57279"/>
    </ligand>
</feature>
<feature type="binding site" evidence="1">
    <location>
        <begin position="239"/>
        <end position="240"/>
    </location>
    <ligand>
        <name>3-amino-2-oxopropyl phosphate</name>
        <dbReference type="ChEBI" id="CHEBI:57279"/>
    </ligand>
</feature>
<feature type="site" description="Transition state stabilizer" evidence="1">
    <location>
        <position position="172"/>
    </location>
</feature>
<dbReference type="EC" id="2.6.99.2" evidence="1"/>
<dbReference type="EMBL" id="CP000082">
    <property type="protein sequence ID" value="AAZ18205.1"/>
    <property type="molecule type" value="Genomic_DNA"/>
</dbReference>
<dbReference type="RefSeq" id="WP_011279643.1">
    <property type="nucleotide sequence ID" value="NC_007204.1"/>
</dbReference>
<dbReference type="SMR" id="Q4FUV3"/>
<dbReference type="STRING" id="259536.Psyc_0336"/>
<dbReference type="KEGG" id="par:Psyc_0336"/>
<dbReference type="eggNOG" id="COG0854">
    <property type="taxonomic scope" value="Bacteria"/>
</dbReference>
<dbReference type="HOGENOM" id="CLU_074563_0_0_6"/>
<dbReference type="UniPathway" id="UPA00244">
    <property type="reaction ID" value="UER00313"/>
</dbReference>
<dbReference type="Proteomes" id="UP000000546">
    <property type="component" value="Chromosome"/>
</dbReference>
<dbReference type="GO" id="GO:0005829">
    <property type="term" value="C:cytosol"/>
    <property type="evidence" value="ECO:0007669"/>
    <property type="project" value="TreeGrafter"/>
</dbReference>
<dbReference type="GO" id="GO:0033856">
    <property type="term" value="F:pyridoxine 5'-phosphate synthase activity"/>
    <property type="evidence" value="ECO:0007669"/>
    <property type="project" value="UniProtKB-EC"/>
</dbReference>
<dbReference type="GO" id="GO:0008615">
    <property type="term" value="P:pyridoxine biosynthetic process"/>
    <property type="evidence" value="ECO:0007669"/>
    <property type="project" value="UniProtKB-UniRule"/>
</dbReference>
<dbReference type="CDD" id="cd00003">
    <property type="entry name" value="PNPsynthase"/>
    <property type="match status" value="1"/>
</dbReference>
<dbReference type="Gene3D" id="3.20.20.70">
    <property type="entry name" value="Aldolase class I"/>
    <property type="match status" value="1"/>
</dbReference>
<dbReference type="HAMAP" id="MF_00279">
    <property type="entry name" value="PdxJ"/>
    <property type="match status" value="1"/>
</dbReference>
<dbReference type="InterPro" id="IPR013785">
    <property type="entry name" value="Aldolase_TIM"/>
</dbReference>
<dbReference type="InterPro" id="IPR004569">
    <property type="entry name" value="PyrdxlP_synth_PdxJ"/>
</dbReference>
<dbReference type="InterPro" id="IPR036130">
    <property type="entry name" value="Pyridoxine-5'_phos_synth"/>
</dbReference>
<dbReference type="NCBIfam" id="TIGR00559">
    <property type="entry name" value="pdxJ"/>
    <property type="match status" value="1"/>
</dbReference>
<dbReference type="NCBIfam" id="NF003623">
    <property type="entry name" value="PRK05265.1-1"/>
    <property type="match status" value="1"/>
</dbReference>
<dbReference type="NCBIfam" id="NF003625">
    <property type="entry name" value="PRK05265.1-3"/>
    <property type="match status" value="1"/>
</dbReference>
<dbReference type="NCBIfam" id="NF003627">
    <property type="entry name" value="PRK05265.1-5"/>
    <property type="match status" value="1"/>
</dbReference>
<dbReference type="PANTHER" id="PTHR30456">
    <property type="entry name" value="PYRIDOXINE 5'-PHOSPHATE SYNTHASE"/>
    <property type="match status" value="1"/>
</dbReference>
<dbReference type="PANTHER" id="PTHR30456:SF0">
    <property type="entry name" value="PYRIDOXINE 5'-PHOSPHATE SYNTHASE"/>
    <property type="match status" value="1"/>
</dbReference>
<dbReference type="Pfam" id="PF03740">
    <property type="entry name" value="PdxJ"/>
    <property type="match status" value="1"/>
</dbReference>
<dbReference type="SUPFAM" id="SSF63892">
    <property type="entry name" value="Pyridoxine 5'-phosphate synthase"/>
    <property type="match status" value="1"/>
</dbReference>
<comment type="function">
    <text evidence="1">Catalyzes the complicated ring closure reaction between the two acyclic compounds 1-deoxy-D-xylulose-5-phosphate (DXP) and 3-amino-2-oxopropyl phosphate (1-amino-acetone-3-phosphate or AAP) to form pyridoxine 5'-phosphate (PNP) and inorganic phosphate.</text>
</comment>
<comment type="catalytic activity">
    <reaction evidence="1">
        <text>3-amino-2-oxopropyl phosphate + 1-deoxy-D-xylulose 5-phosphate = pyridoxine 5'-phosphate + phosphate + 2 H2O + H(+)</text>
        <dbReference type="Rhea" id="RHEA:15265"/>
        <dbReference type="ChEBI" id="CHEBI:15377"/>
        <dbReference type="ChEBI" id="CHEBI:15378"/>
        <dbReference type="ChEBI" id="CHEBI:43474"/>
        <dbReference type="ChEBI" id="CHEBI:57279"/>
        <dbReference type="ChEBI" id="CHEBI:57792"/>
        <dbReference type="ChEBI" id="CHEBI:58589"/>
        <dbReference type="EC" id="2.6.99.2"/>
    </reaction>
</comment>
<comment type="pathway">
    <text evidence="1">Cofactor biosynthesis; pyridoxine 5'-phosphate biosynthesis; pyridoxine 5'-phosphate from D-erythrose 4-phosphate: step 5/5.</text>
</comment>
<comment type="subunit">
    <text evidence="1">Homooctamer; tetramer of dimers.</text>
</comment>
<comment type="subcellular location">
    <subcellularLocation>
        <location evidence="1">Cytoplasm</location>
    </subcellularLocation>
</comment>
<comment type="similarity">
    <text evidence="1">Belongs to the PNP synthase family.</text>
</comment>